<comment type="function">
    <text evidence="1">Converts the preformed base xanthine, a product of nucleic acid breakdown, to xanthosine 5'-monophosphate (XMP), so it can be reused for RNA or DNA synthesis.</text>
</comment>
<comment type="catalytic activity">
    <reaction evidence="1">
        <text>XMP + diphosphate = xanthine + 5-phospho-alpha-D-ribose 1-diphosphate</text>
        <dbReference type="Rhea" id="RHEA:10800"/>
        <dbReference type="ChEBI" id="CHEBI:17712"/>
        <dbReference type="ChEBI" id="CHEBI:33019"/>
        <dbReference type="ChEBI" id="CHEBI:57464"/>
        <dbReference type="ChEBI" id="CHEBI:58017"/>
        <dbReference type="EC" id="2.4.2.22"/>
    </reaction>
</comment>
<comment type="pathway">
    <text evidence="1">Purine metabolism; XMP biosynthesis via salvage pathway; XMP from xanthine: step 1/1.</text>
</comment>
<comment type="subunit">
    <text evidence="1">Homodimer.</text>
</comment>
<comment type="subcellular location">
    <subcellularLocation>
        <location evidence="1">Cytoplasm</location>
    </subcellularLocation>
</comment>
<comment type="similarity">
    <text evidence="1">Belongs to the purine/pyrimidine phosphoribosyltransferase family. Xpt subfamily.</text>
</comment>
<proteinExistence type="inferred from homology"/>
<accession>Q48QC3</accession>
<reference key="1">
    <citation type="journal article" date="2005" name="J. Bacteriol.">
        <title>Whole-genome sequence analysis of Pseudomonas syringae pv. phaseolicola 1448A reveals divergence among pathovars in genes involved in virulence and transposition.</title>
        <authorList>
            <person name="Joardar V."/>
            <person name="Lindeberg M."/>
            <person name="Jackson R.W."/>
            <person name="Selengut J."/>
            <person name="Dodson R."/>
            <person name="Brinkac L.M."/>
            <person name="Daugherty S.C."/>
            <person name="DeBoy R.T."/>
            <person name="Durkin A.S."/>
            <person name="Gwinn Giglio M."/>
            <person name="Madupu R."/>
            <person name="Nelson W.C."/>
            <person name="Rosovitz M.J."/>
            <person name="Sullivan S.A."/>
            <person name="Crabtree J."/>
            <person name="Creasy T."/>
            <person name="Davidsen T.M."/>
            <person name="Haft D.H."/>
            <person name="Zafar N."/>
            <person name="Zhou L."/>
            <person name="Halpin R."/>
            <person name="Holley T."/>
            <person name="Khouri H.M."/>
            <person name="Feldblyum T.V."/>
            <person name="White O."/>
            <person name="Fraser C.M."/>
            <person name="Chatterjee A.K."/>
            <person name="Cartinhour S."/>
            <person name="Schneider D."/>
            <person name="Mansfield J.W."/>
            <person name="Collmer A."/>
            <person name="Buell R."/>
        </authorList>
    </citation>
    <scope>NUCLEOTIDE SEQUENCE [LARGE SCALE GENOMIC DNA]</scope>
    <source>
        <strain>1448A / Race 6</strain>
    </source>
</reference>
<dbReference type="EC" id="2.4.2.22" evidence="1"/>
<dbReference type="EMBL" id="CP000058">
    <property type="protein sequence ID" value="AAZ37375.1"/>
    <property type="molecule type" value="Genomic_DNA"/>
</dbReference>
<dbReference type="RefSeq" id="WP_002551388.1">
    <property type="nucleotide sequence ID" value="NC_005773.3"/>
</dbReference>
<dbReference type="SMR" id="Q48QC3"/>
<dbReference type="KEGG" id="psp:PSPPH_0081"/>
<dbReference type="eggNOG" id="COG0503">
    <property type="taxonomic scope" value="Bacteria"/>
</dbReference>
<dbReference type="HOGENOM" id="CLU_099015_0_0_6"/>
<dbReference type="UniPathway" id="UPA00602">
    <property type="reaction ID" value="UER00658"/>
</dbReference>
<dbReference type="Proteomes" id="UP000000551">
    <property type="component" value="Chromosome"/>
</dbReference>
<dbReference type="GO" id="GO:0005737">
    <property type="term" value="C:cytoplasm"/>
    <property type="evidence" value="ECO:0007669"/>
    <property type="project" value="UniProtKB-SubCell"/>
</dbReference>
<dbReference type="GO" id="GO:0000310">
    <property type="term" value="F:xanthine phosphoribosyltransferase activity"/>
    <property type="evidence" value="ECO:0007669"/>
    <property type="project" value="UniProtKB-UniRule"/>
</dbReference>
<dbReference type="GO" id="GO:0006166">
    <property type="term" value="P:purine ribonucleoside salvage"/>
    <property type="evidence" value="ECO:0007669"/>
    <property type="project" value="UniProtKB-KW"/>
</dbReference>
<dbReference type="GO" id="GO:0046110">
    <property type="term" value="P:xanthine metabolic process"/>
    <property type="evidence" value="ECO:0007669"/>
    <property type="project" value="InterPro"/>
</dbReference>
<dbReference type="GO" id="GO:0032265">
    <property type="term" value="P:XMP salvage"/>
    <property type="evidence" value="ECO:0007669"/>
    <property type="project" value="UniProtKB-UniRule"/>
</dbReference>
<dbReference type="CDD" id="cd06223">
    <property type="entry name" value="PRTases_typeI"/>
    <property type="match status" value="1"/>
</dbReference>
<dbReference type="FunFam" id="3.40.50.2020:FF:000027">
    <property type="entry name" value="Xanthine phosphoribosyltransferase"/>
    <property type="match status" value="1"/>
</dbReference>
<dbReference type="Gene3D" id="3.40.50.2020">
    <property type="match status" value="1"/>
</dbReference>
<dbReference type="HAMAP" id="MF_01184">
    <property type="entry name" value="XPRTase"/>
    <property type="match status" value="1"/>
</dbReference>
<dbReference type="InterPro" id="IPR000836">
    <property type="entry name" value="PRibTrfase_dom"/>
</dbReference>
<dbReference type="InterPro" id="IPR029057">
    <property type="entry name" value="PRTase-like"/>
</dbReference>
<dbReference type="InterPro" id="IPR050118">
    <property type="entry name" value="Pur/Pyrimidine_PRTase"/>
</dbReference>
<dbReference type="InterPro" id="IPR010079">
    <property type="entry name" value="Xanthine_PRibTrfase"/>
</dbReference>
<dbReference type="NCBIfam" id="NF006671">
    <property type="entry name" value="PRK09219.1"/>
    <property type="match status" value="1"/>
</dbReference>
<dbReference type="NCBIfam" id="TIGR01744">
    <property type="entry name" value="XPRTase"/>
    <property type="match status" value="1"/>
</dbReference>
<dbReference type="PANTHER" id="PTHR43864">
    <property type="entry name" value="HYPOXANTHINE/GUANINE PHOSPHORIBOSYLTRANSFERASE"/>
    <property type="match status" value="1"/>
</dbReference>
<dbReference type="PANTHER" id="PTHR43864:SF1">
    <property type="entry name" value="XANTHINE PHOSPHORIBOSYLTRANSFERASE"/>
    <property type="match status" value="1"/>
</dbReference>
<dbReference type="Pfam" id="PF00156">
    <property type="entry name" value="Pribosyltran"/>
    <property type="match status" value="1"/>
</dbReference>
<dbReference type="SUPFAM" id="SSF53271">
    <property type="entry name" value="PRTase-like"/>
    <property type="match status" value="1"/>
</dbReference>
<gene>
    <name evidence="1" type="primary">xpt</name>
    <name type="ordered locus">PSPPH_0081</name>
</gene>
<organism>
    <name type="scientific">Pseudomonas savastanoi pv. phaseolicola (strain 1448A / Race 6)</name>
    <name type="common">Pseudomonas syringae pv. phaseolicola (strain 1448A / Race 6)</name>
    <dbReference type="NCBI Taxonomy" id="264730"/>
    <lineage>
        <taxon>Bacteria</taxon>
        <taxon>Pseudomonadati</taxon>
        <taxon>Pseudomonadota</taxon>
        <taxon>Gammaproteobacteria</taxon>
        <taxon>Pseudomonadales</taxon>
        <taxon>Pseudomonadaceae</taxon>
        <taxon>Pseudomonas</taxon>
    </lineage>
</organism>
<protein>
    <recommendedName>
        <fullName evidence="1">Xanthine phosphoribosyltransferase</fullName>
        <shortName evidence="1">XPRTase</shortName>
        <ecNumber evidence="1">2.4.2.22</ecNumber>
    </recommendedName>
</protein>
<evidence type="ECO:0000255" key="1">
    <source>
        <dbReference type="HAMAP-Rule" id="MF_01184"/>
    </source>
</evidence>
<feature type="chain" id="PRO_0000339738" description="Xanthine phosphoribosyltransferase">
    <location>
        <begin position="1"/>
        <end position="189"/>
    </location>
</feature>
<feature type="binding site" evidence="1">
    <location>
        <position position="20"/>
    </location>
    <ligand>
        <name>xanthine</name>
        <dbReference type="ChEBI" id="CHEBI:17712"/>
    </ligand>
</feature>
<feature type="binding site" evidence="1">
    <location>
        <position position="27"/>
    </location>
    <ligand>
        <name>xanthine</name>
        <dbReference type="ChEBI" id="CHEBI:17712"/>
    </ligand>
</feature>
<feature type="binding site" evidence="1">
    <location>
        <begin position="128"/>
        <end position="132"/>
    </location>
    <ligand>
        <name>5-phospho-alpha-D-ribose 1-diphosphate</name>
        <dbReference type="ChEBI" id="CHEBI:58017"/>
    </ligand>
</feature>
<feature type="binding site" evidence="1">
    <location>
        <position position="156"/>
    </location>
    <ligand>
        <name>xanthine</name>
        <dbReference type="ChEBI" id="CHEBI:17712"/>
    </ligand>
</feature>
<keyword id="KW-0963">Cytoplasm</keyword>
<keyword id="KW-0328">Glycosyltransferase</keyword>
<keyword id="KW-0660">Purine salvage</keyword>
<keyword id="KW-0808">Transferase</keyword>
<name>XPT_PSE14</name>
<sequence>MEALHKKIREEGIVLSDQVLKVDAFLNHQIDPALMKEIGDEFARLFADAGVTKIVTIEASGIAPAVMAGLNMGVPVIFARKHQSLTLTENLLSATVYSFTKQVESTVAISPRHLSSDDHVLIIDDFLANGKASQALISIIKQAGATVAGLGIVIEKSFQGGRAELDAQGYRVESLARVESLAGGVVTFK</sequence>